<reference key="1">
    <citation type="submission" date="2003-02" db="EMBL/GenBank/DDBJ databases">
        <title>Nucleotide sequence and organization of a DNA region of Torulaspora delbrueckii containing the HIS3 gene.</title>
        <authorList>
            <person name="Aller-Arranz E."/>
            <person name="Randez-Gil F."/>
            <person name="Barrio E."/>
            <person name="Prieto J.A."/>
        </authorList>
    </citation>
    <scope>NUCLEOTIDE SEQUENCE [GENOMIC DNA]</scope>
    <source>
        <strain>IGC 5321</strain>
    </source>
</reference>
<comment type="catalytic activity">
    <reaction>
        <text>D-erythro-1-(imidazol-4-yl)glycerol 3-phosphate = 3-(imidazol-4-yl)-2-oxopropyl phosphate + H2O</text>
        <dbReference type="Rhea" id="RHEA:11040"/>
        <dbReference type="ChEBI" id="CHEBI:15377"/>
        <dbReference type="ChEBI" id="CHEBI:57766"/>
        <dbReference type="ChEBI" id="CHEBI:58278"/>
        <dbReference type="EC" id="4.2.1.19"/>
    </reaction>
</comment>
<comment type="pathway">
    <text>Amino-acid biosynthesis; L-histidine biosynthesis; L-histidine from 5-phospho-alpha-D-ribose 1-diphosphate: step 6/9.</text>
</comment>
<comment type="similarity">
    <text evidence="1">Belongs to the imidazoleglycerol-phosphate dehydratase family.</text>
</comment>
<name>HIS7_TORDE</name>
<evidence type="ECO:0000305" key="1"/>
<proteinExistence type="inferred from homology"/>
<dbReference type="EC" id="4.2.1.19"/>
<dbReference type="EMBL" id="AY238990">
    <property type="protein sequence ID" value="AAP69229.1"/>
    <property type="molecule type" value="Genomic_DNA"/>
</dbReference>
<dbReference type="SMR" id="Q6XD66"/>
<dbReference type="KEGG" id="tdl:TDEL_0A05570"/>
<dbReference type="OrthoDB" id="447729at2759"/>
<dbReference type="UniPathway" id="UPA00031">
    <property type="reaction ID" value="UER00011"/>
</dbReference>
<dbReference type="GO" id="GO:0004424">
    <property type="term" value="F:imidazoleglycerol-phosphate dehydratase activity"/>
    <property type="evidence" value="ECO:0007669"/>
    <property type="project" value="UniProtKB-EC"/>
</dbReference>
<dbReference type="GO" id="GO:0000105">
    <property type="term" value="P:L-histidine biosynthetic process"/>
    <property type="evidence" value="ECO:0007669"/>
    <property type="project" value="UniProtKB-UniPathway"/>
</dbReference>
<dbReference type="CDD" id="cd07914">
    <property type="entry name" value="IGPD"/>
    <property type="match status" value="1"/>
</dbReference>
<dbReference type="FunFam" id="3.30.230.40:FF:000005">
    <property type="entry name" value="Imidazoleglycerol-phosphate dehydratase"/>
    <property type="match status" value="1"/>
</dbReference>
<dbReference type="FunFam" id="3.30.230.40:FF:000001">
    <property type="entry name" value="Imidazoleglycerol-phosphate dehydratase HisB"/>
    <property type="match status" value="1"/>
</dbReference>
<dbReference type="Gene3D" id="3.30.230.40">
    <property type="entry name" value="Imidazole glycerol phosphate dehydratase, domain 1"/>
    <property type="match status" value="2"/>
</dbReference>
<dbReference type="HAMAP" id="MF_00076">
    <property type="entry name" value="HisB"/>
    <property type="match status" value="1"/>
</dbReference>
<dbReference type="InterPro" id="IPR038494">
    <property type="entry name" value="IGPD_sf"/>
</dbReference>
<dbReference type="InterPro" id="IPR000807">
    <property type="entry name" value="ImidazoleglycerolP_deHydtase"/>
</dbReference>
<dbReference type="InterPro" id="IPR020565">
    <property type="entry name" value="ImidazoleglycerP_deHydtase_CS"/>
</dbReference>
<dbReference type="InterPro" id="IPR020568">
    <property type="entry name" value="Ribosomal_Su5_D2-typ_SF"/>
</dbReference>
<dbReference type="NCBIfam" id="NF002114">
    <property type="entry name" value="PRK00951.2-4"/>
    <property type="match status" value="1"/>
</dbReference>
<dbReference type="PANTHER" id="PTHR23133:SF2">
    <property type="entry name" value="IMIDAZOLEGLYCEROL-PHOSPHATE DEHYDRATASE"/>
    <property type="match status" value="1"/>
</dbReference>
<dbReference type="PANTHER" id="PTHR23133">
    <property type="entry name" value="IMIDAZOLEGLYCEROL-PHOSPHATE DEHYDRATASE HIS7"/>
    <property type="match status" value="1"/>
</dbReference>
<dbReference type="Pfam" id="PF00475">
    <property type="entry name" value="IGPD"/>
    <property type="match status" value="1"/>
</dbReference>
<dbReference type="SUPFAM" id="SSF54211">
    <property type="entry name" value="Ribosomal protein S5 domain 2-like"/>
    <property type="match status" value="2"/>
</dbReference>
<dbReference type="PROSITE" id="PS00954">
    <property type="entry name" value="IGP_DEHYDRATASE_1"/>
    <property type="match status" value="1"/>
</dbReference>
<dbReference type="PROSITE" id="PS00955">
    <property type="entry name" value="IGP_DEHYDRATASE_2"/>
    <property type="match status" value="1"/>
</dbReference>
<protein>
    <recommendedName>
        <fullName>Imidazoleglycerol-phosphate dehydratase</fullName>
        <shortName>IGPD</shortName>
        <ecNumber>4.2.1.19</ecNumber>
    </recommendedName>
</protein>
<accession>Q6XD66</accession>
<gene>
    <name type="primary">HIS3</name>
</gene>
<feature type="chain" id="PRO_0000158248" description="Imidazoleglycerol-phosphate dehydratase">
    <location>
        <begin position="1"/>
        <end position="223"/>
    </location>
</feature>
<keyword id="KW-0028">Amino-acid biosynthesis</keyword>
<keyword id="KW-0368">Histidine biosynthesis</keyword>
<keyword id="KW-0456">Lyase</keyword>
<sequence length="223" mass="24293">MSERKAFVSRITNETKIQIAISLNGGHIEIKDSILCKKQQENGSDVAAQTTKSQVIDIQTGVGFLDHMIHALAKHSGWSLIVECIGDLHIDDHHTTEDCGIALGQAFKEALGQVRGVKRFGTGFAPLDEALSRAVVDLSNRPYAVIDLGLKREKIGDLSTEMIPHFLESFAEAARLTIHVDCLRGFNDHHRSESAFKALAVAIRESLAPNGTNDVPSTKGVLM</sequence>
<organism>
    <name type="scientific">Torulaspora delbrueckii</name>
    <name type="common">Yeast</name>
    <name type="synonym">Candida colliculosa</name>
    <dbReference type="NCBI Taxonomy" id="4950"/>
    <lineage>
        <taxon>Eukaryota</taxon>
        <taxon>Fungi</taxon>
        <taxon>Dikarya</taxon>
        <taxon>Ascomycota</taxon>
        <taxon>Saccharomycotina</taxon>
        <taxon>Saccharomycetes</taxon>
        <taxon>Saccharomycetales</taxon>
        <taxon>Saccharomycetaceae</taxon>
        <taxon>Torulaspora</taxon>
    </lineage>
</organism>